<name>PURA_GEOSW</name>
<reference key="1">
    <citation type="submission" date="2009-06" db="EMBL/GenBank/DDBJ databases">
        <title>Complete sequence of chromosome of Geopacillus sp. WCH70.</title>
        <authorList>
            <consortium name="US DOE Joint Genome Institute"/>
            <person name="Lucas S."/>
            <person name="Copeland A."/>
            <person name="Lapidus A."/>
            <person name="Glavina del Rio T."/>
            <person name="Dalin E."/>
            <person name="Tice H."/>
            <person name="Bruce D."/>
            <person name="Goodwin L."/>
            <person name="Pitluck S."/>
            <person name="Chertkov O."/>
            <person name="Brettin T."/>
            <person name="Detter J.C."/>
            <person name="Han C."/>
            <person name="Larimer F."/>
            <person name="Land M."/>
            <person name="Hauser L."/>
            <person name="Kyrpides N."/>
            <person name="Mikhailova N."/>
            <person name="Brumm P."/>
            <person name="Mead D.A."/>
            <person name="Richardson P."/>
        </authorList>
    </citation>
    <scope>NUCLEOTIDE SEQUENCE [LARGE SCALE GENOMIC DNA]</scope>
    <source>
        <strain>WCH70</strain>
    </source>
</reference>
<keyword id="KW-0963">Cytoplasm</keyword>
<keyword id="KW-0342">GTP-binding</keyword>
<keyword id="KW-0436">Ligase</keyword>
<keyword id="KW-0460">Magnesium</keyword>
<keyword id="KW-0479">Metal-binding</keyword>
<keyword id="KW-0547">Nucleotide-binding</keyword>
<keyword id="KW-0658">Purine biosynthesis</keyword>
<comment type="function">
    <text evidence="1">Plays an important role in the de novo pathway of purine nucleotide biosynthesis. Catalyzes the first committed step in the biosynthesis of AMP from IMP.</text>
</comment>
<comment type="catalytic activity">
    <reaction evidence="1">
        <text>IMP + L-aspartate + GTP = N(6)-(1,2-dicarboxyethyl)-AMP + GDP + phosphate + 2 H(+)</text>
        <dbReference type="Rhea" id="RHEA:15753"/>
        <dbReference type="ChEBI" id="CHEBI:15378"/>
        <dbReference type="ChEBI" id="CHEBI:29991"/>
        <dbReference type="ChEBI" id="CHEBI:37565"/>
        <dbReference type="ChEBI" id="CHEBI:43474"/>
        <dbReference type="ChEBI" id="CHEBI:57567"/>
        <dbReference type="ChEBI" id="CHEBI:58053"/>
        <dbReference type="ChEBI" id="CHEBI:58189"/>
        <dbReference type="EC" id="6.3.4.4"/>
    </reaction>
</comment>
<comment type="cofactor">
    <cofactor evidence="1">
        <name>Mg(2+)</name>
        <dbReference type="ChEBI" id="CHEBI:18420"/>
    </cofactor>
    <text evidence="1">Binds 1 Mg(2+) ion per subunit.</text>
</comment>
<comment type="pathway">
    <text evidence="1">Purine metabolism; AMP biosynthesis via de novo pathway; AMP from IMP: step 1/2.</text>
</comment>
<comment type="subunit">
    <text evidence="1">Homodimer.</text>
</comment>
<comment type="subcellular location">
    <subcellularLocation>
        <location evidence="1">Cytoplasm</location>
    </subcellularLocation>
</comment>
<comment type="similarity">
    <text evidence="1">Belongs to the adenylosuccinate synthetase family.</text>
</comment>
<feature type="chain" id="PRO_1000201758" description="Adenylosuccinate synthetase">
    <location>
        <begin position="1"/>
        <end position="428"/>
    </location>
</feature>
<feature type="active site" description="Proton acceptor" evidence="1">
    <location>
        <position position="13"/>
    </location>
</feature>
<feature type="active site" description="Proton donor" evidence="1">
    <location>
        <position position="41"/>
    </location>
</feature>
<feature type="binding site" evidence="1">
    <location>
        <begin position="12"/>
        <end position="18"/>
    </location>
    <ligand>
        <name>GTP</name>
        <dbReference type="ChEBI" id="CHEBI:37565"/>
    </ligand>
</feature>
<feature type="binding site" description="in other chain" evidence="1">
    <location>
        <begin position="13"/>
        <end position="16"/>
    </location>
    <ligand>
        <name>IMP</name>
        <dbReference type="ChEBI" id="CHEBI:58053"/>
        <note>ligand shared between dimeric partners</note>
    </ligand>
</feature>
<feature type="binding site" evidence="1">
    <location>
        <position position="13"/>
    </location>
    <ligand>
        <name>Mg(2+)</name>
        <dbReference type="ChEBI" id="CHEBI:18420"/>
    </ligand>
</feature>
<feature type="binding site" description="in other chain" evidence="1">
    <location>
        <begin position="38"/>
        <end position="41"/>
    </location>
    <ligand>
        <name>IMP</name>
        <dbReference type="ChEBI" id="CHEBI:58053"/>
        <note>ligand shared between dimeric partners</note>
    </ligand>
</feature>
<feature type="binding site" evidence="1">
    <location>
        <begin position="40"/>
        <end position="42"/>
    </location>
    <ligand>
        <name>GTP</name>
        <dbReference type="ChEBI" id="CHEBI:37565"/>
    </ligand>
</feature>
<feature type="binding site" evidence="1">
    <location>
        <position position="40"/>
    </location>
    <ligand>
        <name>Mg(2+)</name>
        <dbReference type="ChEBI" id="CHEBI:18420"/>
    </ligand>
</feature>
<feature type="binding site" description="in other chain" evidence="1">
    <location>
        <position position="128"/>
    </location>
    <ligand>
        <name>IMP</name>
        <dbReference type="ChEBI" id="CHEBI:58053"/>
        <note>ligand shared between dimeric partners</note>
    </ligand>
</feature>
<feature type="binding site" evidence="1">
    <location>
        <position position="142"/>
    </location>
    <ligand>
        <name>IMP</name>
        <dbReference type="ChEBI" id="CHEBI:58053"/>
        <note>ligand shared between dimeric partners</note>
    </ligand>
</feature>
<feature type="binding site" description="in other chain" evidence="1">
    <location>
        <position position="223"/>
    </location>
    <ligand>
        <name>IMP</name>
        <dbReference type="ChEBI" id="CHEBI:58053"/>
        <note>ligand shared between dimeric partners</note>
    </ligand>
</feature>
<feature type="binding site" description="in other chain" evidence="1">
    <location>
        <position position="238"/>
    </location>
    <ligand>
        <name>IMP</name>
        <dbReference type="ChEBI" id="CHEBI:58053"/>
        <note>ligand shared between dimeric partners</note>
    </ligand>
</feature>
<feature type="binding site" evidence="1">
    <location>
        <begin position="298"/>
        <end position="304"/>
    </location>
    <ligand>
        <name>substrate</name>
    </ligand>
</feature>
<feature type="binding site" description="in other chain" evidence="1">
    <location>
        <position position="302"/>
    </location>
    <ligand>
        <name>IMP</name>
        <dbReference type="ChEBI" id="CHEBI:58053"/>
        <note>ligand shared between dimeric partners</note>
    </ligand>
</feature>
<feature type="binding site" evidence="1">
    <location>
        <position position="304"/>
    </location>
    <ligand>
        <name>GTP</name>
        <dbReference type="ChEBI" id="CHEBI:37565"/>
    </ligand>
</feature>
<feature type="binding site" evidence="1">
    <location>
        <begin position="330"/>
        <end position="332"/>
    </location>
    <ligand>
        <name>GTP</name>
        <dbReference type="ChEBI" id="CHEBI:37565"/>
    </ligand>
</feature>
<feature type="binding site" evidence="1">
    <location>
        <begin position="412"/>
        <end position="414"/>
    </location>
    <ligand>
        <name>GTP</name>
        <dbReference type="ChEBI" id="CHEBI:37565"/>
    </ligand>
</feature>
<protein>
    <recommendedName>
        <fullName evidence="1">Adenylosuccinate synthetase</fullName>
        <shortName evidence="1">AMPSase</shortName>
        <shortName evidence="1">AdSS</shortName>
        <ecNumber evidence="1">6.3.4.4</ecNumber>
    </recommendedName>
    <alternativeName>
        <fullName evidence="1">IMP--aspartate ligase</fullName>
    </alternativeName>
</protein>
<proteinExistence type="inferred from homology"/>
<dbReference type="EC" id="6.3.4.4" evidence="1"/>
<dbReference type="EMBL" id="CP001638">
    <property type="protein sequence ID" value="ACS26047.1"/>
    <property type="molecule type" value="Genomic_DNA"/>
</dbReference>
<dbReference type="SMR" id="C5D9W9"/>
<dbReference type="STRING" id="471223.GWCH70_3410"/>
<dbReference type="KEGG" id="gwc:GWCH70_3410"/>
<dbReference type="eggNOG" id="COG0104">
    <property type="taxonomic scope" value="Bacteria"/>
</dbReference>
<dbReference type="HOGENOM" id="CLU_029848_0_0_9"/>
<dbReference type="OrthoDB" id="9807553at2"/>
<dbReference type="UniPathway" id="UPA00075">
    <property type="reaction ID" value="UER00335"/>
</dbReference>
<dbReference type="GO" id="GO:0005737">
    <property type="term" value="C:cytoplasm"/>
    <property type="evidence" value="ECO:0007669"/>
    <property type="project" value="UniProtKB-SubCell"/>
</dbReference>
<dbReference type="GO" id="GO:0004019">
    <property type="term" value="F:adenylosuccinate synthase activity"/>
    <property type="evidence" value="ECO:0007669"/>
    <property type="project" value="UniProtKB-UniRule"/>
</dbReference>
<dbReference type="GO" id="GO:0005525">
    <property type="term" value="F:GTP binding"/>
    <property type="evidence" value="ECO:0007669"/>
    <property type="project" value="UniProtKB-UniRule"/>
</dbReference>
<dbReference type="GO" id="GO:0000287">
    <property type="term" value="F:magnesium ion binding"/>
    <property type="evidence" value="ECO:0007669"/>
    <property type="project" value="UniProtKB-UniRule"/>
</dbReference>
<dbReference type="GO" id="GO:0044208">
    <property type="term" value="P:'de novo' AMP biosynthetic process"/>
    <property type="evidence" value="ECO:0007669"/>
    <property type="project" value="UniProtKB-UniRule"/>
</dbReference>
<dbReference type="GO" id="GO:0046040">
    <property type="term" value="P:IMP metabolic process"/>
    <property type="evidence" value="ECO:0007669"/>
    <property type="project" value="TreeGrafter"/>
</dbReference>
<dbReference type="CDD" id="cd03108">
    <property type="entry name" value="AdSS"/>
    <property type="match status" value="1"/>
</dbReference>
<dbReference type="FunFam" id="1.10.300.10:FF:000001">
    <property type="entry name" value="Adenylosuccinate synthetase"/>
    <property type="match status" value="1"/>
</dbReference>
<dbReference type="FunFam" id="3.90.170.10:FF:000001">
    <property type="entry name" value="Adenylosuccinate synthetase"/>
    <property type="match status" value="1"/>
</dbReference>
<dbReference type="Gene3D" id="3.40.440.10">
    <property type="entry name" value="Adenylosuccinate Synthetase, subunit A, domain 1"/>
    <property type="match status" value="1"/>
</dbReference>
<dbReference type="Gene3D" id="1.10.300.10">
    <property type="entry name" value="Adenylosuccinate Synthetase, subunit A, domain 2"/>
    <property type="match status" value="1"/>
</dbReference>
<dbReference type="Gene3D" id="3.90.170.10">
    <property type="entry name" value="Adenylosuccinate Synthetase, subunit A, domain 3"/>
    <property type="match status" value="1"/>
</dbReference>
<dbReference type="HAMAP" id="MF_00011">
    <property type="entry name" value="Adenylosucc_synth"/>
    <property type="match status" value="1"/>
</dbReference>
<dbReference type="InterPro" id="IPR018220">
    <property type="entry name" value="Adenylosuccin_syn_GTP-bd"/>
</dbReference>
<dbReference type="InterPro" id="IPR033128">
    <property type="entry name" value="Adenylosuccin_syn_Lys_AS"/>
</dbReference>
<dbReference type="InterPro" id="IPR042109">
    <property type="entry name" value="Adenylosuccinate_synth_dom1"/>
</dbReference>
<dbReference type="InterPro" id="IPR042110">
    <property type="entry name" value="Adenylosuccinate_synth_dom2"/>
</dbReference>
<dbReference type="InterPro" id="IPR042111">
    <property type="entry name" value="Adenylosuccinate_synth_dom3"/>
</dbReference>
<dbReference type="InterPro" id="IPR001114">
    <property type="entry name" value="Adenylosuccinate_synthetase"/>
</dbReference>
<dbReference type="InterPro" id="IPR027417">
    <property type="entry name" value="P-loop_NTPase"/>
</dbReference>
<dbReference type="NCBIfam" id="NF002223">
    <property type="entry name" value="PRK01117.1"/>
    <property type="match status" value="1"/>
</dbReference>
<dbReference type="NCBIfam" id="TIGR00184">
    <property type="entry name" value="purA"/>
    <property type="match status" value="1"/>
</dbReference>
<dbReference type="PANTHER" id="PTHR11846">
    <property type="entry name" value="ADENYLOSUCCINATE SYNTHETASE"/>
    <property type="match status" value="1"/>
</dbReference>
<dbReference type="PANTHER" id="PTHR11846:SF0">
    <property type="entry name" value="ADENYLOSUCCINATE SYNTHETASE"/>
    <property type="match status" value="1"/>
</dbReference>
<dbReference type="Pfam" id="PF00709">
    <property type="entry name" value="Adenylsucc_synt"/>
    <property type="match status" value="1"/>
</dbReference>
<dbReference type="SMART" id="SM00788">
    <property type="entry name" value="Adenylsucc_synt"/>
    <property type="match status" value="1"/>
</dbReference>
<dbReference type="SUPFAM" id="SSF52540">
    <property type="entry name" value="P-loop containing nucleoside triphosphate hydrolases"/>
    <property type="match status" value="1"/>
</dbReference>
<dbReference type="PROSITE" id="PS01266">
    <property type="entry name" value="ADENYLOSUCCIN_SYN_1"/>
    <property type="match status" value="1"/>
</dbReference>
<dbReference type="PROSITE" id="PS00513">
    <property type="entry name" value="ADENYLOSUCCIN_SYN_2"/>
    <property type="match status" value="1"/>
</dbReference>
<gene>
    <name evidence="1" type="primary">purA</name>
    <name type="ordered locus">GWCH70_3410</name>
</gene>
<organism>
    <name type="scientific">Geobacillus sp. (strain WCH70)</name>
    <dbReference type="NCBI Taxonomy" id="471223"/>
    <lineage>
        <taxon>Bacteria</taxon>
        <taxon>Bacillati</taxon>
        <taxon>Bacillota</taxon>
        <taxon>Bacilli</taxon>
        <taxon>Bacillales</taxon>
        <taxon>Anoxybacillaceae</taxon>
        <taxon>Geobacillus</taxon>
    </lineage>
</organism>
<evidence type="ECO:0000255" key="1">
    <source>
        <dbReference type="HAMAP-Rule" id="MF_00011"/>
    </source>
</evidence>
<sequence>MSSVVVVGTQWGDEGKGKITDFLSENAEVIARYQGGNNAGHTIVFNGEKYKLHLIPSGIFYKDKICVIGNGMVVDPKALVAELKYLHDRGISTDNLRISNRAHVILPYHLKLDELEEERKGANKIGTTKKGIGPAYMDKAARVGIRIVDLLDREVFEEKLARNLQEKNVLFEKVYGVEGFKLEDILDEYYEYGQQIAKYVCDTSVVLNNALDEGRRVLFEGAQGVMLDIDQGTYPFVTSSNPVAGGVTIGAGVGPTKIKHVVGVAKAYTTRVGDGPFPTELHDEIGDRIREVGREYGTTTGRPRRVGWFDSVVVRHARRVSGITDLSLNSIDVLTGIETLKICVAYRYKGKVIEEFPASLKVLAECEPIYEELPGWSEDITGVKSLDELPVNARHYVERISQLTGIPLSIFSVGPDRSQTNVVRSVYA</sequence>
<accession>C5D9W9</accession>